<protein>
    <recommendedName>
        <fullName>Lysophospholipase 1</fullName>
        <ecNumber>3.1.1.5</ecNumber>
    </recommendedName>
    <alternativeName>
        <fullName>Phospholipase B 1</fullName>
    </alternativeName>
</protein>
<comment type="function">
    <text>Catalyzes the release of fatty acids from lysophospholipids.</text>
</comment>
<comment type="catalytic activity">
    <reaction>
        <text>a 1-acyl-sn-glycero-3-phosphocholine + H2O = sn-glycerol 3-phosphocholine + a fatty acid + H(+)</text>
        <dbReference type="Rhea" id="RHEA:15177"/>
        <dbReference type="ChEBI" id="CHEBI:15377"/>
        <dbReference type="ChEBI" id="CHEBI:15378"/>
        <dbReference type="ChEBI" id="CHEBI:16870"/>
        <dbReference type="ChEBI" id="CHEBI:28868"/>
        <dbReference type="ChEBI" id="CHEBI:58168"/>
        <dbReference type="EC" id="3.1.1.5"/>
    </reaction>
</comment>
<comment type="subcellular location">
    <subcellularLocation>
        <location>Cell membrane</location>
        <topology>Lipid-anchor</topology>
        <topology>GPI-anchor</topology>
    </subcellularLocation>
</comment>
<comment type="induction">
    <text evidence="3">Induced by lecithin.</text>
</comment>
<comment type="PTM">
    <text>The GPI-like anchor contains a phosphoceramide lipid group. The anchor position has not been determined.</text>
</comment>
<comment type="similarity">
    <text evidence="4">Belongs to the lysophospholipase family.</text>
</comment>
<gene>
    <name type="primary">plb1</name>
    <name type="ORF">AFUB_065820</name>
</gene>
<feature type="signal peptide" evidence="1">
    <location>
        <begin position="1"/>
        <end position="20"/>
    </location>
</feature>
<feature type="chain" id="PRO_0000372611" description="Lysophospholipase 1">
    <location>
        <begin position="21"/>
        <end position="609"/>
    </location>
</feature>
<feature type="propeptide" id="PRO_0000372612" description="Removed in mature form" evidence="1">
    <location>
        <begin position="610"/>
        <end position="633"/>
    </location>
</feature>
<feature type="domain" description="PLA2c" evidence="2">
    <location>
        <begin position="47"/>
        <end position="594"/>
    </location>
</feature>
<feature type="lipid moiety-binding region" description="GPI-like-anchor amidated serine" evidence="1">
    <location>
        <position position="609"/>
    </location>
</feature>
<feature type="glycosylation site" description="N-linked (GlcNAc...) asparagine" evidence="1">
    <location>
        <position position="64"/>
    </location>
</feature>
<feature type="glycosylation site" description="N-linked (GlcNAc...) asparagine" evidence="1">
    <location>
        <position position="104"/>
    </location>
</feature>
<feature type="glycosylation site" description="N-linked (GlcNAc...) asparagine" evidence="1">
    <location>
        <position position="139"/>
    </location>
</feature>
<feature type="glycosylation site" description="N-linked (GlcNAc...) asparagine" evidence="1">
    <location>
        <position position="173"/>
    </location>
</feature>
<feature type="glycosylation site" description="N-linked (GlcNAc...) asparagine" evidence="1">
    <location>
        <position position="246"/>
    </location>
</feature>
<feature type="glycosylation site" description="N-linked (GlcNAc...) asparagine" evidence="1">
    <location>
        <position position="290"/>
    </location>
</feature>
<feature type="glycosylation site" description="N-linked (GlcNAc...) asparagine" evidence="1">
    <location>
        <position position="329"/>
    </location>
</feature>
<feature type="glycosylation site" description="N-linked (GlcNAc...) asparagine" evidence="1">
    <location>
        <position position="358"/>
    </location>
</feature>
<feature type="glycosylation site" description="N-linked (GlcNAc...) asparagine" evidence="1">
    <location>
        <position position="397"/>
    </location>
</feature>
<feature type="glycosylation site" description="N-linked (GlcNAc...) asparagine" evidence="1">
    <location>
        <position position="450"/>
    </location>
</feature>
<feature type="glycosylation site" description="N-linked (GlcNAc...) asparagine" evidence="1">
    <location>
        <position position="463"/>
    </location>
</feature>
<feature type="glycosylation site" description="N-linked (GlcNAc...) asparagine" evidence="1">
    <location>
        <position position="469"/>
    </location>
</feature>
<feature type="glycosylation site" description="N-linked (GlcNAc...) asparagine" evidence="1">
    <location>
        <position position="497"/>
    </location>
</feature>
<feature type="glycosylation site" description="N-linked (GlcNAc...) asparagine" evidence="1">
    <location>
        <position position="500"/>
    </location>
</feature>
<feature type="glycosylation site" description="N-linked (GlcNAc...) asparagine" evidence="1">
    <location>
        <position position="521"/>
    </location>
</feature>
<feature type="glycosylation site" description="N-linked (GlcNAc...) asparagine" evidence="1">
    <location>
        <position position="549"/>
    </location>
</feature>
<feature type="glycosylation site" description="N-linked (GlcNAc...) asparagine" evidence="1">
    <location>
        <position position="555"/>
    </location>
</feature>
<feature type="glycosylation site" description="N-linked (GlcNAc...) asparagine" evidence="1">
    <location>
        <position position="594"/>
    </location>
</feature>
<reference key="1">
    <citation type="journal article" date="2004" name="FEMS Microbiol. Lett.">
        <title>Characterisation and expression of phospholipases B from the opportunistic fungus Aspergillus fumigatus.</title>
        <authorList>
            <person name="Shen D.-K."/>
            <person name="Noodeh A.D."/>
            <person name="Kazemi A."/>
            <person name="Grillot R."/>
            <person name="Robson G.D."/>
            <person name="Brugere J.-F."/>
        </authorList>
    </citation>
    <scope>NUCLEOTIDE SEQUENCE [MRNA]</scope>
    <scope>INDUCTION</scope>
</reference>
<reference key="2">
    <citation type="journal article" date="2008" name="PLoS Genet.">
        <title>Genomic islands in the pathogenic filamentous fungus Aspergillus fumigatus.</title>
        <authorList>
            <person name="Fedorova N.D."/>
            <person name="Khaldi N."/>
            <person name="Joardar V.S."/>
            <person name="Maiti R."/>
            <person name="Amedeo P."/>
            <person name="Anderson M.J."/>
            <person name="Crabtree J."/>
            <person name="Silva J.C."/>
            <person name="Badger J.H."/>
            <person name="Albarraq A."/>
            <person name="Angiuoli S."/>
            <person name="Bussey H."/>
            <person name="Bowyer P."/>
            <person name="Cotty P.J."/>
            <person name="Dyer P.S."/>
            <person name="Egan A."/>
            <person name="Galens K."/>
            <person name="Fraser-Liggett C.M."/>
            <person name="Haas B.J."/>
            <person name="Inman J.M."/>
            <person name="Kent R."/>
            <person name="Lemieux S."/>
            <person name="Malavazi I."/>
            <person name="Orvis J."/>
            <person name="Roemer T."/>
            <person name="Ronning C.M."/>
            <person name="Sundaram J.P."/>
            <person name="Sutton G."/>
            <person name="Turner G."/>
            <person name="Venter J.C."/>
            <person name="White O.R."/>
            <person name="Whitty B.R."/>
            <person name="Youngman P."/>
            <person name="Wolfe K.H."/>
            <person name="Goldman G.H."/>
            <person name="Wortman J.R."/>
            <person name="Jiang B."/>
            <person name="Denning D.W."/>
            <person name="Nierman W.C."/>
        </authorList>
    </citation>
    <scope>NUCLEOTIDE SEQUENCE [LARGE SCALE GENOMIC DNA]</scope>
    <source>
        <strain>CBS 144.89 / FGSC A1163 / CEA10</strain>
    </source>
</reference>
<reference key="3">
    <citation type="journal article" date="2001" name="Electrophoresis">
        <title>Proteome analysis of Aspergillus fumigatus identifies glycosylphosphatidylinositol-anchored proteins associated to the cell wall biosynthesis.</title>
        <authorList>
            <person name="Bruneau J.-M."/>
            <person name="Magnin T."/>
            <person name="Tagat E."/>
            <person name="Legrand R."/>
            <person name="Bernard M."/>
            <person name="Diaquin M."/>
            <person name="Fudali C."/>
            <person name="Latge J.-P."/>
        </authorList>
    </citation>
    <scope>PROTEIN SEQUENCE OF 89-100 AND 122-131</scope>
    <scope>GPI-ANCHOR</scope>
</reference>
<reference key="4">
    <citation type="journal article" date="2003" name="Glycobiology">
        <title>Structures of the glycosylphosphatidylinositol membrane anchors from Aspergillus fumigatus membrane proteins.</title>
        <authorList>
            <person name="Fontaine T."/>
            <person name="Magnin T."/>
            <person name="Melhert A."/>
            <person name="Lamont D."/>
            <person name="Latge J.-P."/>
            <person name="Ferguson M.A.J."/>
        </authorList>
    </citation>
    <scope>PROTEIN SEQUENCE OF 90-98</scope>
    <scope>STRUCTURE OF GPI-ANCHOR</scope>
</reference>
<proteinExistence type="evidence at protein level"/>
<sequence length="633" mass="68144">MKTTTVACAVAGLLFSCVSGAPDPVHVEIQQRALPNAPDGYTPSTVGCPASRPTIRSAASLSPNETSWLETRRGKTTSAMKDFFNHVKIQDFDAAGYIDRHSSNSSDLPNIGIAVSGGGYRALMNGAGAIKAFDSRTPNSTSAGQLGGLLQSATYLSGLSGGSWLVGSIYINNFTTISALQTHQKGTVWQFQNSIFEGPDGGSIQILDSATYYRDISNAVSGKSDAGYPTSITDYWGRALSYQMINATNGGPSYTWSSIALTDAFQKAEMPMPLVVADGRYPGELLISSNATVYEFNPWEFGTFDPTVFGFAPLEYLGTKFNGGSVPSNESCVRGFDNVGFVMGTSSTLFNQFLLQINSTALPDWLKSVFTDILKDIGENDEDIAQYAPNPFYHFSNTTNPSAAELELDLVDGGEDLQNIPLHPLIQPERHVDVIFAVDSSADTTYSWPNGTALVATYERSLNSSGIANGTSFPAIPDQNTFVNKGLNTRPTFFGCNSSNTTGPSPLIVYLPNYPYTAYSNFSTFQPDYTEQERDSTILNGYDVVTMGNSTRDGNWSTCVGCAILSRSLERTNTNVPEICKQCFQRYCWDGSLNSTTPAGYEPVTILDSAASGIIPSISTVAMAVVFAAWTIF</sequence>
<dbReference type="EC" id="3.1.1.5"/>
<dbReference type="EMBL" id="AY376592">
    <property type="protein sequence ID" value="AAQ85122.1"/>
    <property type="molecule type" value="mRNA"/>
</dbReference>
<dbReference type="EMBL" id="DS499598">
    <property type="protein sequence ID" value="EDP50250.1"/>
    <property type="molecule type" value="Genomic_DNA"/>
</dbReference>
<dbReference type="SMR" id="B0Y665"/>
<dbReference type="Allergome" id="8989">
    <property type="allergen name" value="Asp f LPL1"/>
</dbReference>
<dbReference type="GlyCosmos" id="B0Y665">
    <property type="glycosylation" value="18 sites, No reported glycans"/>
</dbReference>
<dbReference type="EnsemblFungi" id="EDP50250">
    <property type="protein sequence ID" value="EDP50250"/>
    <property type="gene ID" value="AFUB_065820"/>
</dbReference>
<dbReference type="VEuPathDB" id="FungiDB:AFUB_065820"/>
<dbReference type="HOGENOM" id="CLU_014602_0_0_1"/>
<dbReference type="OrthoDB" id="23601at5052"/>
<dbReference type="PhylomeDB" id="B0Y665"/>
<dbReference type="BRENDA" id="3.1.1.5">
    <property type="organism ID" value="508"/>
</dbReference>
<dbReference type="Proteomes" id="UP000001699">
    <property type="component" value="Unassembled WGS sequence"/>
</dbReference>
<dbReference type="GO" id="GO:0005829">
    <property type="term" value="C:cytosol"/>
    <property type="evidence" value="ECO:0007669"/>
    <property type="project" value="TreeGrafter"/>
</dbReference>
<dbReference type="GO" id="GO:0005783">
    <property type="term" value="C:endoplasmic reticulum"/>
    <property type="evidence" value="ECO:0007669"/>
    <property type="project" value="TreeGrafter"/>
</dbReference>
<dbReference type="GO" id="GO:0005886">
    <property type="term" value="C:plasma membrane"/>
    <property type="evidence" value="ECO:0007669"/>
    <property type="project" value="UniProtKB-SubCell"/>
</dbReference>
<dbReference type="GO" id="GO:0098552">
    <property type="term" value="C:side of membrane"/>
    <property type="evidence" value="ECO:0007669"/>
    <property type="project" value="UniProtKB-KW"/>
</dbReference>
<dbReference type="GO" id="GO:0004622">
    <property type="term" value="F:lysophospholipase activity"/>
    <property type="evidence" value="ECO:0007669"/>
    <property type="project" value="UniProtKB-EC"/>
</dbReference>
<dbReference type="GO" id="GO:0004623">
    <property type="term" value="F:phospholipase A2 activity"/>
    <property type="evidence" value="ECO:0007669"/>
    <property type="project" value="TreeGrafter"/>
</dbReference>
<dbReference type="GO" id="GO:0046475">
    <property type="term" value="P:glycerophospholipid catabolic process"/>
    <property type="evidence" value="ECO:0007669"/>
    <property type="project" value="TreeGrafter"/>
</dbReference>
<dbReference type="CDD" id="cd07203">
    <property type="entry name" value="cPLA2_Fungal_PLB"/>
    <property type="match status" value="1"/>
</dbReference>
<dbReference type="FunFam" id="3.40.1090.10:FF:000010">
    <property type="entry name" value="Lysophospholipase"/>
    <property type="match status" value="1"/>
</dbReference>
<dbReference type="Gene3D" id="3.40.1090.10">
    <property type="entry name" value="Cytosolic phospholipase A2 catalytic domain"/>
    <property type="match status" value="1"/>
</dbReference>
<dbReference type="InterPro" id="IPR016035">
    <property type="entry name" value="Acyl_Trfase/lysoPLipase"/>
</dbReference>
<dbReference type="InterPro" id="IPR002642">
    <property type="entry name" value="LysoPLipase_cat_dom"/>
</dbReference>
<dbReference type="PANTHER" id="PTHR10728">
    <property type="entry name" value="CYTOSOLIC PHOSPHOLIPASE A2"/>
    <property type="match status" value="1"/>
</dbReference>
<dbReference type="PANTHER" id="PTHR10728:SF62">
    <property type="entry name" value="LYSOPHOSPHOLIPASE"/>
    <property type="match status" value="1"/>
</dbReference>
<dbReference type="Pfam" id="PF01735">
    <property type="entry name" value="PLA2_B"/>
    <property type="match status" value="1"/>
</dbReference>
<dbReference type="SMART" id="SM00022">
    <property type="entry name" value="PLAc"/>
    <property type="match status" value="1"/>
</dbReference>
<dbReference type="SUPFAM" id="SSF52151">
    <property type="entry name" value="FabD/lysophospholipase-like"/>
    <property type="match status" value="1"/>
</dbReference>
<dbReference type="PROSITE" id="PS51210">
    <property type="entry name" value="PLA2C"/>
    <property type="match status" value="1"/>
</dbReference>
<organism>
    <name type="scientific">Aspergillus fumigatus (strain CBS 144.89 / FGSC A1163 / CEA10)</name>
    <name type="common">Neosartorya fumigata</name>
    <dbReference type="NCBI Taxonomy" id="451804"/>
    <lineage>
        <taxon>Eukaryota</taxon>
        <taxon>Fungi</taxon>
        <taxon>Dikarya</taxon>
        <taxon>Ascomycota</taxon>
        <taxon>Pezizomycotina</taxon>
        <taxon>Eurotiomycetes</taxon>
        <taxon>Eurotiomycetidae</taxon>
        <taxon>Eurotiales</taxon>
        <taxon>Aspergillaceae</taxon>
        <taxon>Aspergillus</taxon>
        <taxon>Aspergillus subgen. Fumigati</taxon>
    </lineage>
</organism>
<keyword id="KW-1003">Cell membrane</keyword>
<keyword id="KW-0903">Direct protein sequencing</keyword>
<keyword id="KW-0325">Glycoprotein</keyword>
<keyword id="KW-0336">GPI-anchor</keyword>
<keyword id="KW-0378">Hydrolase</keyword>
<keyword id="KW-0442">Lipid degradation</keyword>
<keyword id="KW-0443">Lipid metabolism</keyword>
<keyword id="KW-0449">Lipoprotein</keyword>
<keyword id="KW-0472">Membrane</keyword>
<keyword id="KW-0732">Signal</keyword>
<name>PLB1_ASPFC</name>
<evidence type="ECO:0000255" key="1"/>
<evidence type="ECO:0000255" key="2">
    <source>
        <dbReference type="PROSITE-ProRule" id="PRU00555"/>
    </source>
</evidence>
<evidence type="ECO:0000269" key="3">
    <source>
    </source>
</evidence>
<evidence type="ECO:0000305" key="4"/>
<accession>B0Y665</accession>
<accession>Q4WPC0</accession>
<accession>Q6U820</accession>
<accession>Q9P8P5</accession>